<sequence length="43" mass="4343">MKKVFFGLVILTALAISFVAGQQSVSTASASDEVTVASAIRGA</sequence>
<name>AIMP_BPPHT</name>
<accession>P0DOE2</accession>
<dbReference type="EMBL" id="KY030782">
    <property type="protein sequence ID" value="APD21233.1"/>
    <property type="molecule type" value="Genomic_DNA"/>
</dbReference>
<dbReference type="Proteomes" id="UP000188400">
    <property type="component" value="Genome"/>
</dbReference>
<dbReference type="GO" id="GO:0005576">
    <property type="term" value="C:extracellular region"/>
    <property type="evidence" value="ECO:0007669"/>
    <property type="project" value="UniProtKB-SubCell"/>
</dbReference>
<dbReference type="GO" id="GO:0098689">
    <property type="term" value="P:latency-replication decision"/>
    <property type="evidence" value="ECO:0000314"/>
    <property type="project" value="UniProtKB"/>
</dbReference>
<dbReference type="NCBIfam" id="NF033802">
    <property type="entry name" value="AimP_fam"/>
    <property type="match status" value="1"/>
</dbReference>
<reference key="1">
    <citation type="journal article" date="2017" name="Nature">
        <title>Communication between viruses guides lysis-lysogeny decisions.</title>
        <authorList>
            <person name="Erez Z."/>
            <person name="Steinberger-Levy I."/>
            <person name="Shamir M."/>
            <person name="Doron S."/>
            <person name="Stokar-Avihail A."/>
            <person name="Peleg Y."/>
            <person name="Melamed S."/>
            <person name="Leavitt A."/>
            <person name="Savidor A."/>
            <person name="Albeck S."/>
            <person name="Amitai G."/>
            <person name="Sorek R."/>
        </authorList>
    </citation>
    <scope>NUCLEOTIDE SEQUENCE [GENOMIC DNA]</scope>
    <scope>FUNCTION</scope>
    <scope>SUBCELLULAR LOCATION</scope>
    <scope>PROTEOLYTIC CLEAVAGE</scope>
    <scope>SUBUNIT</scope>
</reference>
<organism>
    <name type="scientific">Bacillus phage phi3T</name>
    <name type="common">Bacteriophage phi-3T</name>
    <dbReference type="NCBI Taxonomy" id="10736"/>
    <lineage>
        <taxon>Viruses</taxon>
        <taxon>Duplodnaviria</taxon>
        <taxon>Heunggongvirae</taxon>
        <taxon>Uroviricota</taxon>
        <taxon>Caudoviricetes</taxon>
        <taxon>Spbetavirus</taxon>
    </lineage>
</organism>
<gene>
    <name type="primary">aimP</name>
    <name type="ordered locus">phi3T_90</name>
</gene>
<keyword id="KW-1252">Latency-replication decision</keyword>
<keyword id="KW-0964">Secreted</keyword>
<keyword id="KW-0732">Signal</keyword>
<proteinExistence type="evidence at protein level"/>
<protein>
    <recommendedName>
        <fullName evidence="3">Protein AimP</fullName>
    </recommendedName>
    <component>
        <recommendedName>
            <fullName evidence="3">Arbitrium peptide</fullName>
        </recommendedName>
    </component>
</protein>
<comment type="function">
    <molecule>Protein AimP</molecule>
    <text evidence="2">Part of the latency-replication switch system which decides at the onset of infection whether to replicate and lyse the host or to lysogenize (latency) and keep the host viable.</text>
</comment>
<comment type="function">
    <molecule>Arbitrium peptide</molecule>
    <text evidence="2">Peptide which is released by the infected host bacteria and acts as a communication agent that affects the latency versus replication (lysogeny-lysis) decision for any new infecting virus from the same specie. High concentration of arbitrium peptide results in increased lysogeny in the upcoming viruses. The arbitrium peptide is secreted by infected bacteria and, after several cycles of infection, accumulates in the extracellular medium. When a virus from the same specie subsequently infects an uninfected bacterium which has internalized the peptide via its OPP transporter, the peptide will binds to the viral AimR transcriptional regulator and prevents AimR transcriptional activation of the aimX locus. Inhibition of aimX transcription promotes lysogeny.</text>
</comment>
<comment type="subunit">
    <molecule>Arbitrium peptide</molecule>
    <text evidence="2">Interacts with the viral AimR transcriptional regulator; this interaction changes the oligomeric state of AimR from an active dimer to an inactive monomer leading to lysogeny.</text>
</comment>
<comment type="subcellular location">
    <molecule>Arbitrium peptide</molecule>
    <subcellularLocation>
        <location evidence="2">Secreted</location>
    </subcellularLocation>
</comment>
<comment type="PTM">
    <molecule>Protein AimP</molecule>
    <text evidence="2">Cleaved by host extracellular proteases, thereby releasing the mature arbitrium peptide.</text>
</comment>
<comment type="online information" name="Protein Spotlight">
    <link uri="https://www.proteinspotlight.org/back_issues/190/"/>
    <text>Between you and me - Issue 190 of April 2017</text>
</comment>
<evidence type="ECO:0000255" key="1"/>
<evidence type="ECO:0000269" key="2">
    <source>
    </source>
</evidence>
<evidence type="ECO:0000303" key="3">
    <source>
    </source>
</evidence>
<feature type="signal peptide" evidence="1">
    <location>
        <begin position="1"/>
        <end position="30"/>
    </location>
</feature>
<feature type="chain" id="PRO_0000439252" description="Protein AimP" evidence="1">
    <location>
        <begin position="31"/>
        <end position="43"/>
    </location>
</feature>
<feature type="peptide" id="PRO_0000439253" description="Arbitrium peptide" evidence="2">
    <location>
        <begin position="38"/>
        <end position="43"/>
    </location>
</feature>
<feature type="site" description="Cleavage; by host" evidence="2">
    <location>
        <begin position="37"/>
        <end position="38"/>
    </location>
</feature>
<organismHost>
    <name type="scientific">Bacillus subtilis</name>
    <dbReference type="NCBI Taxonomy" id="1423"/>
</organismHost>